<comment type="function">
    <text evidence="2">GTP hydrolase that promotes the GTP-dependent binding of aminoacyl-tRNA to the A-site of ribosomes during protein biosynthesis.</text>
</comment>
<comment type="catalytic activity">
    <reaction evidence="2">
        <text>GTP + H2O = GDP + phosphate + H(+)</text>
        <dbReference type="Rhea" id="RHEA:19669"/>
        <dbReference type="ChEBI" id="CHEBI:15377"/>
        <dbReference type="ChEBI" id="CHEBI:15378"/>
        <dbReference type="ChEBI" id="CHEBI:37565"/>
        <dbReference type="ChEBI" id="CHEBI:43474"/>
        <dbReference type="ChEBI" id="CHEBI:58189"/>
        <dbReference type="EC" id="3.6.5.3"/>
    </reaction>
    <physiologicalReaction direction="left-to-right" evidence="2">
        <dbReference type="Rhea" id="RHEA:19670"/>
    </physiologicalReaction>
</comment>
<comment type="subunit">
    <text evidence="2">Monomer.</text>
</comment>
<comment type="subcellular location">
    <subcellularLocation>
        <location evidence="2">Cytoplasm</location>
    </subcellularLocation>
</comment>
<comment type="similarity">
    <text evidence="2">Belongs to the TRAFAC class translation factor GTPase superfamily. Classic translation factor GTPase family. EF-Tu/EF-1A subfamily.</text>
</comment>
<gene>
    <name evidence="2" type="primary">tuf2</name>
    <name type="ordered locus">PsycPRwf_2043</name>
</gene>
<accession>A5WH42</accession>
<protein>
    <recommendedName>
        <fullName evidence="2">Elongation factor Tu 2</fullName>
        <shortName evidence="2">EF-Tu 2</shortName>
        <ecNumber evidence="2">3.6.5.3</ecNumber>
    </recommendedName>
</protein>
<dbReference type="EC" id="3.6.5.3" evidence="2"/>
<dbReference type="EMBL" id="CP000713">
    <property type="protein sequence ID" value="ABQ94983.1"/>
    <property type="molecule type" value="Genomic_DNA"/>
</dbReference>
<dbReference type="SMR" id="A5WH42"/>
<dbReference type="STRING" id="349106.PsycPRwf_2043"/>
<dbReference type="KEGG" id="prw:PsycPRwf_2043"/>
<dbReference type="eggNOG" id="COG0050">
    <property type="taxonomic scope" value="Bacteria"/>
</dbReference>
<dbReference type="HOGENOM" id="CLU_007265_0_0_6"/>
<dbReference type="GO" id="GO:0005829">
    <property type="term" value="C:cytosol"/>
    <property type="evidence" value="ECO:0007669"/>
    <property type="project" value="TreeGrafter"/>
</dbReference>
<dbReference type="GO" id="GO:0005525">
    <property type="term" value="F:GTP binding"/>
    <property type="evidence" value="ECO:0007669"/>
    <property type="project" value="UniProtKB-UniRule"/>
</dbReference>
<dbReference type="GO" id="GO:0003924">
    <property type="term" value="F:GTPase activity"/>
    <property type="evidence" value="ECO:0007669"/>
    <property type="project" value="InterPro"/>
</dbReference>
<dbReference type="GO" id="GO:0097216">
    <property type="term" value="F:guanosine tetraphosphate binding"/>
    <property type="evidence" value="ECO:0007669"/>
    <property type="project" value="UniProtKB-ARBA"/>
</dbReference>
<dbReference type="GO" id="GO:0003746">
    <property type="term" value="F:translation elongation factor activity"/>
    <property type="evidence" value="ECO:0007669"/>
    <property type="project" value="UniProtKB-UniRule"/>
</dbReference>
<dbReference type="CDD" id="cd01884">
    <property type="entry name" value="EF_Tu"/>
    <property type="match status" value="1"/>
</dbReference>
<dbReference type="CDD" id="cd03697">
    <property type="entry name" value="EFTU_II"/>
    <property type="match status" value="1"/>
</dbReference>
<dbReference type="CDD" id="cd03707">
    <property type="entry name" value="EFTU_III"/>
    <property type="match status" value="1"/>
</dbReference>
<dbReference type="FunFam" id="2.40.30.10:FF:000001">
    <property type="entry name" value="Elongation factor Tu"/>
    <property type="match status" value="1"/>
</dbReference>
<dbReference type="FunFam" id="3.40.50.300:FF:000003">
    <property type="entry name" value="Elongation factor Tu"/>
    <property type="match status" value="1"/>
</dbReference>
<dbReference type="Gene3D" id="3.40.50.300">
    <property type="entry name" value="P-loop containing nucleotide triphosphate hydrolases"/>
    <property type="match status" value="1"/>
</dbReference>
<dbReference type="Gene3D" id="2.40.30.10">
    <property type="entry name" value="Translation factors"/>
    <property type="match status" value="2"/>
</dbReference>
<dbReference type="HAMAP" id="MF_00118_B">
    <property type="entry name" value="EF_Tu_B"/>
    <property type="match status" value="1"/>
</dbReference>
<dbReference type="InterPro" id="IPR041709">
    <property type="entry name" value="EF-Tu_GTP-bd"/>
</dbReference>
<dbReference type="InterPro" id="IPR050055">
    <property type="entry name" value="EF-Tu_GTPase"/>
</dbReference>
<dbReference type="InterPro" id="IPR004161">
    <property type="entry name" value="EFTu-like_2"/>
</dbReference>
<dbReference type="InterPro" id="IPR033720">
    <property type="entry name" value="EFTU_2"/>
</dbReference>
<dbReference type="InterPro" id="IPR031157">
    <property type="entry name" value="G_TR_CS"/>
</dbReference>
<dbReference type="InterPro" id="IPR027417">
    <property type="entry name" value="P-loop_NTPase"/>
</dbReference>
<dbReference type="InterPro" id="IPR005225">
    <property type="entry name" value="Small_GTP-bd"/>
</dbReference>
<dbReference type="InterPro" id="IPR000795">
    <property type="entry name" value="T_Tr_GTP-bd_dom"/>
</dbReference>
<dbReference type="InterPro" id="IPR009000">
    <property type="entry name" value="Transl_B-barrel_sf"/>
</dbReference>
<dbReference type="InterPro" id="IPR009001">
    <property type="entry name" value="Transl_elong_EF1A/Init_IF2_C"/>
</dbReference>
<dbReference type="InterPro" id="IPR004541">
    <property type="entry name" value="Transl_elong_EFTu/EF1A_bac/org"/>
</dbReference>
<dbReference type="InterPro" id="IPR004160">
    <property type="entry name" value="Transl_elong_EFTu/EF1A_C"/>
</dbReference>
<dbReference type="NCBIfam" id="TIGR00485">
    <property type="entry name" value="EF-Tu"/>
    <property type="match status" value="1"/>
</dbReference>
<dbReference type="NCBIfam" id="NF000766">
    <property type="entry name" value="PRK00049.1"/>
    <property type="match status" value="1"/>
</dbReference>
<dbReference type="NCBIfam" id="NF009372">
    <property type="entry name" value="PRK12735.1"/>
    <property type="match status" value="1"/>
</dbReference>
<dbReference type="NCBIfam" id="NF009373">
    <property type="entry name" value="PRK12736.1"/>
    <property type="match status" value="1"/>
</dbReference>
<dbReference type="NCBIfam" id="TIGR00231">
    <property type="entry name" value="small_GTP"/>
    <property type="match status" value="1"/>
</dbReference>
<dbReference type="PANTHER" id="PTHR43721:SF22">
    <property type="entry name" value="ELONGATION FACTOR TU, MITOCHONDRIAL"/>
    <property type="match status" value="1"/>
</dbReference>
<dbReference type="PANTHER" id="PTHR43721">
    <property type="entry name" value="ELONGATION FACTOR TU-RELATED"/>
    <property type="match status" value="1"/>
</dbReference>
<dbReference type="Pfam" id="PF00009">
    <property type="entry name" value="GTP_EFTU"/>
    <property type="match status" value="1"/>
</dbReference>
<dbReference type="Pfam" id="PF03144">
    <property type="entry name" value="GTP_EFTU_D2"/>
    <property type="match status" value="1"/>
</dbReference>
<dbReference type="Pfam" id="PF03143">
    <property type="entry name" value="GTP_EFTU_D3"/>
    <property type="match status" value="1"/>
</dbReference>
<dbReference type="PRINTS" id="PR00315">
    <property type="entry name" value="ELONGATNFCT"/>
</dbReference>
<dbReference type="SUPFAM" id="SSF50465">
    <property type="entry name" value="EF-Tu/eEF-1alpha/eIF2-gamma C-terminal domain"/>
    <property type="match status" value="1"/>
</dbReference>
<dbReference type="SUPFAM" id="SSF52540">
    <property type="entry name" value="P-loop containing nucleoside triphosphate hydrolases"/>
    <property type="match status" value="1"/>
</dbReference>
<dbReference type="SUPFAM" id="SSF50447">
    <property type="entry name" value="Translation proteins"/>
    <property type="match status" value="1"/>
</dbReference>
<dbReference type="PROSITE" id="PS00301">
    <property type="entry name" value="G_TR_1"/>
    <property type="match status" value="1"/>
</dbReference>
<dbReference type="PROSITE" id="PS51722">
    <property type="entry name" value="G_TR_2"/>
    <property type="match status" value="1"/>
</dbReference>
<evidence type="ECO:0000250" key="1"/>
<evidence type="ECO:0000255" key="2">
    <source>
        <dbReference type="HAMAP-Rule" id="MF_00118"/>
    </source>
</evidence>
<reference key="1">
    <citation type="submission" date="2007-05" db="EMBL/GenBank/DDBJ databases">
        <title>Complete sequence of chromosome of Psychrobacter sp. PRwf-1.</title>
        <authorList>
            <consortium name="US DOE Joint Genome Institute"/>
            <person name="Copeland A."/>
            <person name="Lucas S."/>
            <person name="Lapidus A."/>
            <person name="Barry K."/>
            <person name="Detter J.C."/>
            <person name="Glavina del Rio T."/>
            <person name="Hammon N."/>
            <person name="Israni S."/>
            <person name="Dalin E."/>
            <person name="Tice H."/>
            <person name="Pitluck S."/>
            <person name="Chain P."/>
            <person name="Malfatti S."/>
            <person name="Shin M."/>
            <person name="Vergez L."/>
            <person name="Schmutz J."/>
            <person name="Larimer F."/>
            <person name="Land M."/>
            <person name="Hauser L."/>
            <person name="Kyrpides N."/>
            <person name="Kim E."/>
            <person name="Tiedje J."/>
            <person name="Richardson P."/>
        </authorList>
    </citation>
    <scope>NUCLEOTIDE SEQUENCE [LARGE SCALE GENOMIC DNA]</scope>
    <source>
        <strain>PRwf-1</strain>
    </source>
</reference>
<organism>
    <name type="scientific">Psychrobacter sp. (strain PRwf-1)</name>
    <dbReference type="NCBI Taxonomy" id="349106"/>
    <lineage>
        <taxon>Bacteria</taxon>
        <taxon>Pseudomonadati</taxon>
        <taxon>Pseudomonadota</taxon>
        <taxon>Gammaproteobacteria</taxon>
        <taxon>Moraxellales</taxon>
        <taxon>Moraxellaceae</taxon>
        <taxon>Psychrobacter</taxon>
    </lineage>
</organism>
<proteinExistence type="inferred from homology"/>
<feature type="chain" id="PRO_0000337482" description="Elongation factor Tu 2">
    <location>
        <begin position="1"/>
        <end position="396"/>
    </location>
</feature>
<feature type="domain" description="tr-type G">
    <location>
        <begin position="10"/>
        <end position="206"/>
    </location>
</feature>
<feature type="region of interest" description="G1" evidence="1">
    <location>
        <begin position="19"/>
        <end position="26"/>
    </location>
</feature>
<feature type="region of interest" description="G2" evidence="1">
    <location>
        <begin position="60"/>
        <end position="64"/>
    </location>
</feature>
<feature type="region of interest" description="G3" evidence="1">
    <location>
        <begin position="81"/>
        <end position="84"/>
    </location>
</feature>
<feature type="region of interest" description="G4" evidence="1">
    <location>
        <begin position="136"/>
        <end position="139"/>
    </location>
</feature>
<feature type="region of interest" description="G5" evidence="1">
    <location>
        <begin position="174"/>
        <end position="176"/>
    </location>
</feature>
<feature type="binding site" evidence="2">
    <location>
        <begin position="19"/>
        <end position="26"/>
    </location>
    <ligand>
        <name>GTP</name>
        <dbReference type="ChEBI" id="CHEBI:37565"/>
    </ligand>
</feature>
<feature type="binding site" evidence="2">
    <location>
        <position position="26"/>
    </location>
    <ligand>
        <name>Mg(2+)</name>
        <dbReference type="ChEBI" id="CHEBI:18420"/>
    </ligand>
</feature>
<feature type="binding site" evidence="2">
    <location>
        <begin position="81"/>
        <end position="85"/>
    </location>
    <ligand>
        <name>GTP</name>
        <dbReference type="ChEBI" id="CHEBI:37565"/>
    </ligand>
</feature>
<feature type="binding site" evidence="2">
    <location>
        <begin position="136"/>
        <end position="139"/>
    </location>
    <ligand>
        <name>GTP</name>
        <dbReference type="ChEBI" id="CHEBI:37565"/>
    </ligand>
</feature>
<sequence length="396" mass="43195">MAKAKFERNKPHVNVGTIGHVDHGKTTLTAAIATVAAKTFGGEAKDYAAIDSAPEEKARGITINTSHIEYDTADRHYAHVDCPGHADYVKNMITGAAQMDGAILVVSATDGPMPQTREHILLSRQVGVPYIMVFMNKCDMVDDEELLELVEMEVRELLSDYDFPGDDTPIIKGSALEALNGKDGKYGEPAVIELLNTLDTYIPEPERDIDKPFLMPIEDVFSISGRGTVVTGRVESGIVKVGDEIEIVGIRDTQKTTCTGVEMFRKLLDEGRAGENCGVLLRGTKREDVQRGQVLAKPGSITPHTKFDAEVYVLSKEEGGRHTPFLNGYRPQFYFRTTDVTGAISLQEGTEMVMPGDNVEMSVELIHPIAMDKGLRFAIREGGRTVGAGVVANVKD</sequence>
<name>EFTU2_PSYWF</name>
<keyword id="KW-0963">Cytoplasm</keyword>
<keyword id="KW-0251">Elongation factor</keyword>
<keyword id="KW-0342">GTP-binding</keyword>
<keyword id="KW-0378">Hydrolase</keyword>
<keyword id="KW-0460">Magnesium</keyword>
<keyword id="KW-0479">Metal-binding</keyword>
<keyword id="KW-0547">Nucleotide-binding</keyword>
<keyword id="KW-0648">Protein biosynthesis</keyword>